<organism>
    <name type="scientific">Escherichia coli (strain SMS-3-5 / SECEC)</name>
    <dbReference type="NCBI Taxonomy" id="439855"/>
    <lineage>
        <taxon>Bacteria</taxon>
        <taxon>Pseudomonadati</taxon>
        <taxon>Pseudomonadota</taxon>
        <taxon>Gammaproteobacteria</taxon>
        <taxon>Enterobacterales</taxon>
        <taxon>Enterobacteriaceae</taxon>
        <taxon>Escherichia</taxon>
    </lineage>
</organism>
<reference key="1">
    <citation type="journal article" date="2008" name="J. Bacteriol.">
        <title>Insights into the environmental resistance gene pool from the genome sequence of the multidrug-resistant environmental isolate Escherichia coli SMS-3-5.</title>
        <authorList>
            <person name="Fricke W.F."/>
            <person name="Wright M.S."/>
            <person name="Lindell A.H."/>
            <person name="Harkins D.M."/>
            <person name="Baker-Austin C."/>
            <person name="Ravel J."/>
            <person name="Stepanauskas R."/>
        </authorList>
    </citation>
    <scope>NUCLEOTIDE SEQUENCE [LARGE SCALE GENOMIC DNA]</scope>
    <source>
        <strain>SMS-3-5 / SECEC</strain>
    </source>
</reference>
<keyword id="KW-0119">Carbohydrate metabolism</keyword>
<keyword id="KW-0963">Cytoplasm</keyword>
<keyword id="KW-0413">Isomerase</keyword>
<keyword id="KW-0460">Magnesium</keyword>
<keyword id="KW-0479">Metal-binding</keyword>
<keyword id="KW-0859">Xylose metabolism</keyword>
<proteinExistence type="inferred from homology"/>
<feature type="chain" id="PRO_1000200290" description="Xylose isomerase">
    <location>
        <begin position="1"/>
        <end position="440"/>
    </location>
</feature>
<feature type="active site" evidence="1">
    <location>
        <position position="101"/>
    </location>
</feature>
<feature type="active site" evidence="1">
    <location>
        <position position="104"/>
    </location>
</feature>
<feature type="binding site" evidence="1">
    <location>
        <position position="232"/>
    </location>
    <ligand>
        <name>Mg(2+)</name>
        <dbReference type="ChEBI" id="CHEBI:18420"/>
        <label>1</label>
    </ligand>
</feature>
<feature type="binding site" evidence="1">
    <location>
        <position position="268"/>
    </location>
    <ligand>
        <name>Mg(2+)</name>
        <dbReference type="ChEBI" id="CHEBI:18420"/>
        <label>1</label>
    </ligand>
</feature>
<feature type="binding site" evidence="1">
    <location>
        <position position="268"/>
    </location>
    <ligand>
        <name>Mg(2+)</name>
        <dbReference type="ChEBI" id="CHEBI:18420"/>
        <label>2</label>
    </ligand>
</feature>
<feature type="binding site" evidence="1">
    <location>
        <position position="271"/>
    </location>
    <ligand>
        <name>Mg(2+)</name>
        <dbReference type="ChEBI" id="CHEBI:18420"/>
        <label>2</label>
    </ligand>
</feature>
<feature type="binding site" evidence="1">
    <location>
        <position position="296"/>
    </location>
    <ligand>
        <name>Mg(2+)</name>
        <dbReference type="ChEBI" id="CHEBI:18420"/>
        <label>1</label>
    </ligand>
</feature>
<feature type="binding site" evidence="1">
    <location>
        <position position="307"/>
    </location>
    <ligand>
        <name>Mg(2+)</name>
        <dbReference type="ChEBI" id="CHEBI:18420"/>
        <label>2</label>
    </ligand>
</feature>
<feature type="binding site" evidence="1">
    <location>
        <position position="309"/>
    </location>
    <ligand>
        <name>Mg(2+)</name>
        <dbReference type="ChEBI" id="CHEBI:18420"/>
        <label>2</label>
    </ligand>
</feature>
<feature type="binding site" evidence="1">
    <location>
        <position position="339"/>
    </location>
    <ligand>
        <name>Mg(2+)</name>
        <dbReference type="ChEBI" id="CHEBI:18420"/>
        <label>1</label>
    </ligand>
</feature>
<comment type="catalytic activity">
    <reaction evidence="1">
        <text>alpha-D-xylose = alpha-D-xylulofuranose</text>
        <dbReference type="Rhea" id="RHEA:22816"/>
        <dbReference type="ChEBI" id="CHEBI:28518"/>
        <dbReference type="ChEBI" id="CHEBI:188998"/>
        <dbReference type="EC" id="5.3.1.5"/>
    </reaction>
</comment>
<comment type="cofactor">
    <cofactor evidence="1">
        <name>Mg(2+)</name>
        <dbReference type="ChEBI" id="CHEBI:18420"/>
    </cofactor>
    <text evidence="1">Binds 2 magnesium ions per subunit.</text>
</comment>
<comment type="subunit">
    <text evidence="1">Homotetramer.</text>
</comment>
<comment type="subcellular location">
    <subcellularLocation>
        <location evidence="1">Cytoplasm</location>
    </subcellularLocation>
</comment>
<comment type="similarity">
    <text evidence="1">Belongs to the xylose isomerase family.</text>
</comment>
<evidence type="ECO:0000255" key="1">
    <source>
        <dbReference type="HAMAP-Rule" id="MF_00455"/>
    </source>
</evidence>
<protein>
    <recommendedName>
        <fullName evidence="1">Xylose isomerase</fullName>
        <ecNumber evidence="1">5.3.1.5</ecNumber>
    </recommendedName>
</protein>
<sequence length="440" mass="49719">MQAYFDQLDRVRYEGSKSSNPLAFRHYNPDELVLGKRMEEHLRFAACYWHTFCWNGADMFGVGAFNRPWQQPGEALALAKRKADVAFEFFHKLHVPFYCFHDVDVSPEGASLKEYINNFAQMVDVLAGKQEESGVKLLWGTANCFTNPRYGAGAATNPDPEVFSWAATQVVTAMEATHKLGGENYVLWGGREGYETLLNTDLRQEREQLGRFMQMVVEHKHKIGFQGTLLIEPKPQEPTKHQYDYDAATVYGFLKQFGLEKEIKLNIEANHATLAGHSFHHEIATAIALGLFGSVDANRGDAQLGWDTDQFPNSVEENALVMYEILKAGGFTTGGLNFDAKVRRQSTDKYDLFYGHIGAMDTMALALKIAARMIEDGELDKRIAQRYSGWNSELGQQILKGQMSLADLAKYAQEHNLSPVHQSGRQEQLENLVNHYLFDK</sequence>
<gene>
    <name evidence="1" type="primary">xylA</name>
    <name type="ordered locus">EcSMS35_3888</name>
</gene>
<accession>B1LJC7</accession>
<dbReference type="EC" id="5.3.1.5" evidence="1"/>
<dbReference type="EMBL" id="CP000970">
    <property type="protein sequence ID" value="ACB17239.1"/>
    <property type="molecule type" value="Genomic_DNA"/>
</dbReference>
<dbReference type="RefSeq" id="WP_001149592.1">
    <property type="nucleotide sequence ID" value="NC_010498.1"/>
</dbReference>
<dbReference type="SMR" id="B1LJC7"/>
<dbReference type="GeneID" id="75173765"/>
<dbReference type="KEGG" id="ecm:EcSMS35_3888"/>
<dbReference type="HOGENOM" id="CLU_037261_1_0_6"/>
<dbReference type="Proteomes" id="UP000007011">
    <property type="component" value="Chromosome"/>
</dbReference>
<dbReference type="GO" id="GO:0005737">
    <property type="term" value="C:cytoplasm"/>
    <property type="evidence" value="ECO:0007669"/>
    <property type="project" value="UniProtKB-SubCell"/>
</dbReference>
<dbReference type="GO" id="GO:0000287">
    <property type="term" value="F:magnesium ion binding"/>
    <property type="evidence" value="ECO:0007669"/>
    <property type="project" value="UniProtKB-UniRule"/>
</dbReference>
<dbReference type="GO" id="GO:0009045">
    <property type="term" value="F:xylose isomerase activity"/>
    <property type="evidence" value="ECO:0007669"/>
    <property type="project" value="UniProtKB-UniRule"/>
</dbReference>
<dbReference type="GO" id="GO:0042732">
    <property type="term" value="P:D-xylose metabolic process"/>
    <property type="evidence" value="ECO:0007669"/>
    <property type="project" value="UniProtKB-UniRule"/>
</dbReference>
<dbReference type="FunFam" id="3.20.20.150:FF:000002">
    <property type="entry name" value="Xylose isomerase"/>
    <property type="match status" value="1"/>
</dbReference>
<dbReference type="Gene3D" id="3.20.20.150">
    <property type="entry name" value="Divalent-metal-dependent TIM barrel enzymes"/>
    <property type="match status" value="1"/>
</dbReference>
<dbReference type="HAMAP" id="MF_00455">
    <property type="entry name" value="Xylose_isom_A"/>
    <property type="match status" value="1"/>
</dbReference>
<dbReference type="InterPro" id="IPR036237">
    <property type="entry name" value="Xyl_isomerase-like_sf"/>
</dbReference>
<dbReference type="InterPro" id="IPR013452">
    <property type="entry name" value="Xylose_isom_bac"/>
</dbReference>
<dbReference type="InterPro" id="IPR001998">
    <property type="entry name" value="Xylose_isomerase"/>
</dbReference>
<dbReference type="NCBIfam" id="NF003998">
    <property type="entry name" value="PRK05474.1"/>
    <property type="match status" value="1"/>
</dbReference>
<dbReference type="NCBIfam" id="TIGR02630">
    <property type="entry name" value="xylose_isom_A"/>
    <property type="match status" value="1"/>
</dbReference>
<dbReference type="PANTHER" id="PTHR48408">
    <property type="match status" value="1"/>
</dbReference>
<dbReference type="PANTHER" id="PTHR48408:SF1">
    <property type="entry name" value="XYLOSE ISOMERASE"/>
    <property type="match status" value="1"/>
</dbReference>
<dbReference type="PRINTS" id="PR00688">
    <property type="entry name" value="XYLOSISMRASE"/>
</dbReference>
<dbReference type="SUPFAM" id="SSF51658">
    <property type="entry name" value="Xylose isomerase-like"/>
    <property type="match status" value="1"/>
</dbReference>
<dbReference type="PROSITE" id="PS51415">
    <property type="entry name" value="XYLOSE_ISOMERASE"/>
    <property type="match status" value="1"/>
</dbReference>
<name>XYLA_ECOSM</name>